<dbReference type="EC" id="1.13.11.24"/>
<dbReference type="EMBL" id="AB005554">
    <property type="protein sequence ID" value="BAA21586.1"/>
    <property type="molecule type" value="Genomic_DNA"/>
</dbReference>
<dbReference type="EMBL" id="AL009126">
    <property type="protein sequence ID" value="CAB16035.2"/>
    <property type="molecule type" value="Genomic_DNA"/>
</dbReference>
<dbReference type="PIR" id="F70071">
    <property type="entry name" value="F70071"/>
</dbReference>
<dbReference type="RefSeq" id="NP_391878.2">
    <property type="nucleotide sequence ID" value="NC_000964.3"/>
</dbReference>
<dbReference type="RefSeq" id="WP_003243000.1">
    <property type="nucleotide sequence ID" value="NZ_OZ025638.1"/>
</dbReference>
<dbReference type="PDB" id="1Y3T">
    <property type="method" value="X-ray"/>
    <property type="resolution" value="2.40 A"/>
    <property type="chains" value="A/B=1-337"/>
</dbReference>
<dbReference type="PDB" id="2H0V">
    <property type="method" value="X-ray"/>
    <property type="resolution" value="2.60 A"/>
    <property type="chains" value="A/B=1-337"/>
</dbReference>
<dbReference type="PDB" id="8HFB">
    <property type="method" value="X-ray"/>
    <property type="resolution" value="2.24 A"/>
    <property type="chains" value="A/B=1-337"/>
</dbReference>
<dbReference type="PDBsum" id="1Y3T"/>
<dbReference type="PDBsum" id="2H0V"/>
<dbReference type="PDBsum" id="8HFB"/>
<dbReference type="SMR" id="P42106"/>
<dbReference type="FunCoup" id="P42106">
    <property type="interactions" value="35"/>
</dbReference>
<dbReference type="STRING" id="224308.BSU39980"/>
<dbReference type="PaxDb" id="224308-BSU39980"/>
<dbReference type="DNASU" id="937689"/>
<dbReference type="EnsemblBacteria" id="CAB16035">
    <property type="protein sequence ID" value="CAB16035"/>
    <property type="gene ID" value="BSU_39980"/>
</dbReference>
<dbReference type="GeneID" id="937689"/>
<dbReference type="KEGG" id="bsu:BSU39980"/>
<dbReference type="PATRIC" id="fig|224308.179.peg.4324"/>
<dbReference type="eggNOG" id="COG1917">
    <property type="taxonomic scope" value="Bacteria"/>
</dbReference>
<dbReference type="InParanoid" id="P42106"/>
<dbReference type="OrthoDB" id="9798709at2"/>
<dbReference type="BioCyc" id="BSUB:BSU39980-MONOMER"/>
<dbReference type="BRENDA" id="1.13.11.24">
    <property type="organism ID" value="658"/>
</dbReference>
<dbReference type="SABIO-RK" id="P42106"/>
<dbReference type="UniPathway" id="UPA00724"/>
<dbReference type="EvolutionaryTrace" id="P42106"/>
<dbReference type="Proteomes" id="UP000001570">
    <property type="component" value="Chromosome"/>
</dbReference>
<dbReference type="GO" id="GO:0046872">
    <property type="term" value="F:metal ion binding"/>
    <property type="evidence" value="ECO:0007669"/>
    <property type="project" value="UniProtKB-KW"/>
</dbReference>
<dbReference type="GO" id="GO:0008127">
    <property type="term" value="F:quercetin 2,3-dioxygenase activity"/>
    <property type="evidence" value="ECO:0007669"/>
    <property type="project" value="UniProtKB-EC"/>
</dbReference>
<dbReference type="CDD" id="cd02215">
    <property type="entry name" value="cupin_QDO_N_C"/>
    <property type="match status" value="2"/>
</dbReference>
<dbReference type="Gene3D" id="2.60.120.10">
    <property type="entry name" value="Jelly Rolls"/>
    <property type="match status" value="2"/>
</dbReference>
<dbReference type="InterPro" id="IPR013096">
    <property type="entry name" value="Cupin_2"/>
</dbReference>
<dbReference type="InterPro" id="IPR053146">
    <property type="entry name" value="QDO-like"/>
</dbReference>
<dbReference type="InterPro" id="IPR014710">
    <property type="entry name" value="RmlC-like_jellyroll"/>
</dbReference>
<dbReference type="InterPro" id="IPR011051">
    <property type="entry name" value="RmlC_Cupin_sf"/>
</dbReference>
<dbReference type="PANTHER" id="PTHR36440">
    <property type="entry name" value="PUTATIVE (AFU_ORTHOLOGUE AFUA_8G07350)-RELATED"/>
    <property type="match status" value="1"/>
</dbReference>
<dbReference type="PANTHER" id="PTHR36440:SF1">
    <property type="entry name" value="PUTATIVE (AFU_ORTHOLOGUE AFUA_8G07350)-RELATED"/>
    <property type="match status" value="1"/>
</dbReference>
<dbReference type="Pfam" id="PF07883">
    <property type="entry name" value="Cupin_2"/>
    <property type="match status" value="2"/>
</dbReference>
<dbReference type="SUPFAM" id="SSF51182">
    <property type="entry name" value="RmlC-like cupins"/>
    <property type="match status" value="1"/>
</dbReference>
<feature type="chain" id="PRO_0000097135" description="Quercetin 2,3-dioxygenase">
    <location>
        <begin position="1"/>
        <end position="337"/>
    </location>
</feature>
<feature type="domain" description="Cupin type-2 1" evidence="1">
    <location>
        <begin position="55"/>
        <end position="110"/>
    </location>
</feature>
<feature type="domain" description="Cupin type-2 2" evidence="1">
    <location>
        <begin position="226"/>
        <end position="281"/>
    </location>
</feature>
<feature type="binding site">
    <location>
        <position position="62"/>
    </location>
    <ligand>
        <name>Fe cation</name>
        <dbReference type="ChEBI" id="CHEBI:24875"/>
        <label>1</label>
    </ligand>
</feature>
<feature type="binding site">
    <location>
        <position position="64"/>
    </location>
    <ligand>
        <name>Fe cation</name>
        <dbReference type="ChEBI" id="CHEBI:24875"/>
        <label>1</label>
    </ligand>
</feature>
<feature type="binding site">
    <location>
        <position position="69"/>
    </location>
    <ligand>
        <name>Fe cation</name>
        <dbReference type="ChEBI" id="CHEBI:24875"/>
        <label>1</label>
    </ligand>
</feature>
<feature type="binding site">
    <location>
        <position position="103"/>
    </location>
    <ligand>
        <name>Fe cation</name>
        <dbReference type="ChEBI" id="CHEBI:24875"/>
        <label>1</label>
    </ligand>
</feature>
<feature type="binding site">
    <location>
        <position position="234"/>
    </location>
    <ligand>
        <name>Fe cation</name>
        <dbReference type="ChEBI" id="CHEBI:24875"/>
        <label>2</label>
    </ligand>
</feature>
<feature type="binding site">
    <location>
        <position position="236"/>
    </location>
    <ligand>
        <name>Fe cation</name>
        <dbReference type="ChEBI" id="CHEBI:24875"/>
        <label>2</label>
    </ligand>
</feature>
<feature type="binding site">
    <location>
        <position position="241"/>
    </location>
    <ligand>
        <name>Fe cation</name>
        <dbReference type="ChEBI" id="CHEBI:24875"/>
        <label>2</label>
    </ligand>
</feature>
<feature type="binding site">
    <location>
        <position position="275"/>
    </location>
    <ligand>
        <name>Fe cation</name>
        <dbReference type="ChEBI" id="CHEBI:24875"/>
        <label>2</label>
    </ligand>
</feature>
<feature type="sequence conflict" description="In Ref. 1; BAA21586." evidence="4" ref="1">
    <original>D</original>
    <variation>T</variation>
    <location>
        <position position="160"/>
    </location>
</feature>
<feature type="sequence conflict" description="In Ref. 1; BAA21586." evidence="4" ref="1">
    <original>E</original>
    <variation>K</variation>
    <location>
        <position position="314"/>
    </location>
</feature>
<feature type="strand" evidence="7">
    <location>
        <begin position="11"/>
        <end position="13"/>
    </location>
</feature>
<feature type="strand" evidence="7">
    <location>
        <begin position="16"/>
        <end position="18"/>
    </location>
</feature>
<feature type="strand" evidence="7">
    <location>
        <begin position="23"/>
        <end position="28"/>
    </location>
</feature>
<feature type="strand" evidence="7">
    <location>
        <begin position="31"/>
        <end position="37"/>
    </location>
</feature>
<feature type="helix" evidence="7">
    <location>
        <begin position="39"/>
        <end position="42"/>
    </location>
</feature>
<feature type="strand" evidence="7">
    <location>
        <begin position="44"/>
        <end position="53"/>
    </location>
</feature>
<feature type="strand" evidence="7">
    <location>
        <begin position="58"/>
        <end position="63"/>
    </location>
</feature>
<feature type="strand" evidence="7">
    <location>
        <begin position="69"/>
        <end position="76"/>
    </location>
</feature>
<feature type="strand" evidence="7">
    <location>
        <begin position="78"/>
        <end position="82"/>
    </location>
</feature>
<feature type="strand" evidence="7">
    <location>
        <begin position="85"/>
        <end position="89"/>
    </location>
</feature>
<feature type="strand" evidence="7">
    <location>
        <begin position="94"/>
        <end position="97"/>
    </location>
</feature>
<feature type="strand" evidence="7">
    <location>
        <begin position="103"/>
        <end position="107"/>
    </location>
</feature>
<feature type="strand" evidence="7">
    <location>
        <begin position="109"/>
        <end position="123"/>
    </location>
</feature>
<feature type="helix" evidence="7">
    <location>
        <begin position="124"/>
        <end position="126"/>
    </location>
</feature>
<feature type="helix" evidence="7">
    <location>
        <begin position="127"/>
        <end position="130"/>
    </location>
</feature>
<feature type="strand" evidence="7">
    <location>
        <begin position="131"/>
        <end position="133"/>
    </location>
</feature>
<feature type="helix" evidence="7">
    <location>
        <begin position="149"/>
        <end position="155"/>
    </location>
</feature>
<feature type="turn" evidence="7">
    <location>
        <begin position="156"/>
        <end position="158"/>
    </location>
</feature>
<feature type="strand" evidence="7">
    <location>
        <begin position="183"/>
        <end position="185"/>
    </location>
</feature>
<feature type="strand" evidence="7">
    <location>
        <begin position="188"/>
        <end position="190"/>
    </location>
</feature>
<feature type="strand" evidence="7">
    <location>
        <begin position="195"/>
        <end position="200"/>
    </location>
</feature>
<feature type="strand" evidence="7">
    <location>
        <begin position="203"/>
        <end position="209"/>
    </location>
</feature>
<feature type="helix" evidence="7">
    <location>
        <begin position="211"/>
        <end position="213"/>
    </location>
</feature>
<feature type="turn" evidence="7">
    <location>
        <begin position="214"/>
        <end position="216"/>
    </location>
</feature>
<feature type="strand" evidence="7">
    <location>
        <begin position="219"/>
        <end position="225"/>
    </location>
</feature>
<feature type="strand" evidence="7">
    <location>
        <begin position="240"/>
        <end position="248"/>
    </location>
</feature>
<feature type="strand" evidence="7">
    <location>
        <begin position="250"/>
        <end position="256"/>
    </location>
</feature>
<feature type="strand" evidence="7">
    <location>
        <begin position="258"/>
        <end position="261"/>
    </location>
</feature>
<feature type="strand" evidence="7">
    <location>
        <begin position="266"/>
        <end position="269"/>
    </location>
</feature>
<feature type="strand" evidence="7">
    <location>
        <begin position="275"/>
        <end position="279"/>
    </location>
</feature>
<feature type="strand" evidence="7">
    <location>
        <begin position="281"/>
        <end position="292"/>
    </location>
</feature>
<feature type="helix" evidence="7">
    <location>
        <begin position="296"/>
        <end position="302"/>
    </location>
</feature>
<feature type="strand" evidence="7">
    <location>
        <begin position="303"/>
        <end position="305"/>
    </location>
</feature>
<feature type="strand" evidence="5">
    <location>
        <begin position="308"/>
        <end position="310"/>
    </location>
</feature>
<feature type="helix" evidence="5">
    <location>
        <begin position="320"/>
        <end position="325"/>
    </location>
</feature>
<feature type="helix" evidence="6">
    <location>
        <begin position="327"/>
        <end position="329"/>
    </location>
</feature>
<feature type="strand" evidence="7">
    <location>
        <begin position="331"/>
        <end position="333"/>
    </location>
</feature>
<evidence type="ECO:0000255" key="1"/>
<evidence type="ECO:0000269" key="2">
    <source>
    </source>
</evidence>
<evidence type="ECO:0000269" key="3">
    <source>
    </source>
</evidence>
<evidence type="ECO:0000305" key="4"/>
<evidence type="ECO:0007829" key="5">
    <source>
        <dbReference type="PDB" id="1Y3T"/>
    </source>
</evidence>
<evidence type="ECO:0007829" key="6">
    <source>
        <dbReference type="PDB" id="2H0V"/>
    </source>
</evidence>
<evidence type="ECO:0007829" key="7">
    <source>
        <dbReference type="PDB" id="8HFB"/>
    </source>
</evidence>
<protein>
    <recommendedName>
        <fullName>Quercetin 2,3-dioxygenase</fullName>
        <shortName>Quercetinase</shortName>
        <ecNumber>1.13.11.24</ecNumber>
    </recommendedName>
    <alternativeName>
        <fullName>Flavonol 2,4-dioxygenase</fullName>
    </alternativeName>
</protein>
<gene>
    <name type="primary">qdoI</name>
    <name type="synonym">yxaG</name>
    <name type="ordered locus">BSU39980</name>
    <name type="ORF">S14G</name>
</gene>
<reference key="1">
    <citation type="journal article" date="1995" name="DNA Res.">
        <title>Cloning and sequencing of a 36-kb region of the Bacillus subtilis genome between the gnt and iol operons.</title>
        <authorList>
            <person name="Yoshida K."/>
            <person name="Seki S."/>
            <person name="Fujimura M."/>
            <person name="Miwa Y."/>
            <person name="Fujita Y."/>
        </authorList>
    </citation>
    <scope>NUCLEOTIDE SEQUENCE [GENOMIC DNA]</scope>
    <source>
        <strain>168 / BGSC1A1</strain>
    </source>
</reference>
<reference key="2">
    <citation type="journal article" date="1997" name="Nature">
        <title>The complete genome sequence of the Gram-positive bacterium Bacillus subtilis.</title>
        <authorList>
            <person name="Kunst F."/>
            <person name="Ogasawara N."/>
            <person name="Moszer I."/>
            <person name="Albertini A.M."/>
            <person name="Alloni G."/>
            <person name="Azevedo V."/>
            <person name="Bertero M.G."/>
            <person name="Bessieres P."/>
            <person name="Bolotin A."/>
            <person name="Borchert S."/>
            <person name="Borriss R."/>
            <person name="Boursier L."/>
            <person name="Brans A."/>
            <person name="Braun M."/>
            <person name="Brignell S.C."/>
            <person name="Bron S."/>
            <person name="Brouillet S."/>
            <person name="Bruschi C.V."/>
            <person name="Caldwell B."/>
            <person name="Capuano V."/>
            <person name="Carter N.M."/>
            <person name="Choi S.-K."/>
            <person name="Codani J.-J."/>
            <person name="Connerton I.F."/>
            <person name="Cummings N.J."/>
            <person name="Daniel R.A."/>
            <person name="Denizot F."/>
            <person name="Devine K.M."/>
            <person name="Duesterhoeft A."/>
            <person name="Ehrlich S.D."/>
            <person name="Emmerson P.T."/>
            <person name="Entian K.-D."/>
            <person name="Errington J."/>
            <person name="Fabret C."/>
            <person name="Ferrari E."/>
            <person name="Foulger D."/>
            <person name="Fritz C."/>
            <person name="Fujita M."/>
            <person name="Fujita Y."/>
            <person name="Fuma S."/>
            <person name="Galizzi A."/>
            <person name="Galleron N."/>
            <person name="Ghim S.-Y."/>
            <person name="Glaser P."/>
            <person name="Goffeau A."/>
            <person name="Golightly E.J."/>
            <person name="Grandi G."/>
            <person name="Guiseppi G."/>
            <person name="Guy B.J."/>
            <person name="Haga K."/>
            <person name="Haiech J."/>
            <person name="Harwood C.R."/>
            <person name="Henaut A."/>
            <person name="Hilbert H."/>
            <person name="Holsappel S."/>
            <person name="Hosono S."/>
            <person name="Hullo M.-F."/>
            <person name="Itaya M."/>
            <person name="Jones L.-M."/>
            <person name="Joris B."/>
            <person name="Karamata D."/>
            <person name="Kasahara Y."/>
            <person name="Klaerr-Blanchard M."/>
            <person name="Klein C."/>
            <person name="Kobayashi Y."/>
            <person name="Koetter P."/>
            <person name="Koningstein G."/>
            <person name="Krogh S."/>
            <person name="Kumano M."/>
            <person name="Kurita K."/>
            <person name="Lapidus A."/>
            <person name="Lardinois S."/>
            <person name="Lauber J."/>
            <person name="Lazarevic V."/>
            <person name="Lee S.-M."/>
            <person name="Levine A."/>
            <person name="Liu H."/>
            <person name="Masuda S."/>
            <person name="Mauel C."/>
            <person name="Medigue C."/>
            <person name="Medina N."/>
            <person name="Mellado R.P."/>
            <person name="Mizuno M."/>
            <person name="Moestl D."/>
            <person name="Nakai S."/>
            <person name="Noback M."/>
            <person name="Noone D."/>
            <person name="O'Reilly M."/>
            <person name="Ogawa K."/>
            <person name="Ogiwara A."/>
            <person name="Oudega B."/>
            <person name="Park S.-H."/>
            <person name="Parro V."/>
            <person name="Pohl T.M."/>
            <person name="Portetelle D."/>
            <person name="Porwollik S."/>
            <person name="Prescott A.M."/>
            <person name="Presecan E."/>
            <person name="Pujic P."/>
            <person name="Purnelle B."/>
            <person name="Rapoport G."/>
            <person name="Rey M."/>
            <person name="Reynolds S."/>
            <person name="Rieger M."/>
            <person name="Rivolta C."/>
            <person name="Rocha E."/>
            <person name="Roche B."/>
            <person name="Rose M."/>
            <person name="Sadaie Y."/>
            <person name="Sato T."/>
            <person name="Scanlan E."/>
            <person name="Schleich S."/>
            <person name="Schroeter R."/>
            <person name="Scoffone F."/>
            <person name="Sekiguchi J."/>
            <person name="Sekowska A."/>
            <person name="Seror S.J."/>
            <person name="Serror P."/>
            <person name="Shin B.-S."/>
            <person name="Soldo B."/>
            <person name="Sorokin A."/>
            <person name="Tacconi E."/>
            <person name="Takagi T."/>
            <person name="Takahashi H."/>
            <person name="Takemaru K."/>
            <person name="Takeuchi M."/>
            <person name="Tamakoshi A."/>
            <person name="Tanaka T."/>
            <person name="Terpstra P."/>
            <person name="Tognoni A."/>
            <person name="Tosato V."/>
            <person name="Uchiyama S."/>
            <person name="Vandenbol M."/>
            <person name="Vannier F."/>
            <person name="Vassarotti A."/>
            <person name="Viari A."/>
            <person name="Wambutt R."/>
            <person name="Wedler E."/>
            <person name="Wedler H."/>
            <person name="Weitzenegger T."/>
            <person name="Winters P."/>
            <person name="Wipat A."/>
            <person name="Yamamoto H."/>
            <person name="Yamane K."/>
            <person name="Yasumoto K."/>
            <person name="Yata K."/>
            <person name="Yoshida K."/>
            <person name="Yoshikawa H.-F."/>
            <person name="Zumstein E."/>
            <person name="Yoshikawa H."/>
            <person name="Danchin A."/>
        </authorList>
    </citation>
    <scope>NUCLEOTIDE SEQUENCE [LARGE SCALE GENOMIC DNA]</scope>
    <source>
        <strain>168</strain>
    </source>
</reference>
<reference key="3">
    <citation type="journal article" date="2009" name="Microbiology">
        <title>From a consortium sequence to a unified sequence: the Bacillus subtilis 168 reference genome a decade later.</title>
        <authorList>
            <person name="Barbe V."/>
            <person name="Cruveiller S."/>
            <person name="Kunst F."/>
            <person name="Lenoble P."/>
            <person name="Meurice G."/>
            <person name="Sekowska A."/>
            <person name="Vallenet D."/>
            <person name="Wang T."/>
            <person name="Moszer I."/>
            <person name="Medigue C."/>
            <person name="Danchin A."/>
        </authorList>
    </citation>
    <scope>SEQUENCE REVISION TO 160 AND 314</scope>
</reference>
<reference key="4">
    <citation type="journal article" date="2004" name="FEBS Lett.">
        <title>Bacillus subtilis YxaG is a novel Fe-containing quercetin 2,3-dioxygenase.</title>
        <authorList>
            <person name="Bowater L."/>
            <person name="Fairhurst S.A."/>
            <person name="Just V.J."/>
            <person name="Bornemann S."/>
        </authorList>
    </citation>
    <scope>FUNCTION</scope>
    <scope>BIOPHYSICOCHEMICAL PROPERTIES</scope>
    <scope>MASS SPECTROMETRY</scope>
    <source>
        <strain>168</strain>
    </source>
</reference>
<reference key="5">
    <citation type="journal article" date="2004" name="Protein Expr. Purif.">
        <title>Evidence for a new metal in a known active site: purification and characterization of an iron-containing quercetin 2,3-dioxygenase from Bacillus subtilis.</title>
        <authorList>
            <person name="Barney B.M."/>
            <person name="Schaab M.R."/>
            <person name="LoBrutto R."/>
            <person name="Francisco W.A."/>
        </authorList>
    </citation>
    <scope>CHARACTERIZATION</scope>
    <scope>COFACTOR</scope>
</reference>
<reference key="6">
    <citation type="journal article" date="2005" name="Biochemistry">
        <title>The crystal structure of a quercetin 2,3-dioxygenase from Bacillus subtilis suggests modulation of enzyme activity by a change in the metal ion at the active site(s).</title>
        <authorList>
            <person name="Gopal B."/>
            <person name="Madan L.L."/>
            <person name="Betz S.F."/>
            <person name="Kossiakoff A.A."/>
        </authorList>
    </citation>
    <scope>X-RAY CRYSTALLOGRAPHY (2.4 ANGSTROMS)</scope>
</reference>
<keyword id="KW-0002">3D-structure</keyword>
<keyword id="KW-0223">Dioxygenase</keyword>
<keyword id="KW-0408">Iron</keyword>
<keyword id="KW-0479">Metal-binding</keyword>
<keyword id="KW-0560">Oxidoreductase</keyword>
<keyword id="KW-1185">Reference proteome</keyword>
<keyword id="KW-0677">Repeat</keyword>
<organism>
    <name type="scientific">Bacillus subtilis (strain 168)</name>
    <dbReference type="NCBI Taxonomy" id="224308"/>
    <lineage>
        <taxon>Bacteria</taxon>
        <taxon>Bacillati</taxon>
        <taxon>Bacillota</taxon>
        <taxon>Bacilli</taxon>
        <taxon>Bacillales</taxon>
        <taxon>Bacillaceae</taxon>
        <taxon>Bacillus</taxon>
    </lineage>
</organism>
<comment type="function">
    <text evidence="2">Performs the first step in the degradation of the flavonoid quercetin by a dioxygenase reaction. The enzyme catalyzes the cleavage of the O-heteroaromatic ring of the flavonol quercetin yielding the depside 2-protocatechuoyl-phloroglucinol carboxylic acid and carbon monoxide. This involves the remarkable dioxygenolytic cleavage of two carbon-carbon bonds.</text>
</comment>
<comment type="catalytic activity">
    <reaction>
        <text>quercetin + O2 = 2-(3,4-dihydroxybenzoyloxy)-4,6-dihydroxybenzoate + CO</text>
        <dbReference type="Rhea" id="RHEA:15381"/>
        <dbReference type="ChEBI" id="CHEBI:15379"/>
        <dbReference type="ChEBI" id="CHEBI:17245"/>
        <dbReference type="ChEBI" id="CHEBI:57628"/>
        <dbReference type="ChEBI" id="CHEBI:57694"/>
        <dbReference type="EC" id="1.13.11.24"/>
    </reaction>
</comment>
<comment type="cofactor">
    <cofactor evidence="3">
        <name>Fe(2+)</name>
        <dbReference type="ChEBI" id="CHEBI:29033"/>
    </cofactor>
    <text evidence="3">Binds 2 Fe(2+) ions per subunit.</text>
</comment>
<comment type="biophysicochemical properties">
    <kinetics>
        <KM evidence="2">3.8 uM for quercetin</KM>
        <Vmax evidence="2">2.0 umol/min/mg enzyme</Vmax>
    </kinetics>
</comment>
<comment type="pathway">
    <text>Flavonoid metabolism; quercetin degradation.</text>
</comment>
<comment type="subunit">
    <text>Homodimer.</text>
</comment>
<comment type="mass spectrometry" mass="38658.0" method="MALDI" evidence="2"/>
<sequence length="337" mass="37600">MKTLCTHSLPKEKMPYLLRSGEGERYLFGRQVATVMANGRSTGDLFEIVLLSGGKGDAFPLHVHKDTHEGILVLDGKLELTLDGERYLLISGDYANIPAGTPHSYRMQSHRTRLVSYTMKGNVAHLYSVIGNPYDHAEHPPYASEEVSNERFAEAAAVADIVFLDEAKPACSAKLAELTELPDGAVPYVLESGEGDRLLTGDQLHRIVAAQKNTDGQFIVVSSEGPKGDRIVDHYHEYHTETFYCLEGQMTMWTDGQEIQLNPGDFLHVPANTVHSYRLDSHYTKMVGVLVPGLFEPFFRTLGDPYEGHIFPCEPQALRFDRILQNIEALDLKVMKP</sequence>
<accession>P42106</accession>
<proteinExistence type="evidence at protein level"/>
<name>QDOI_BACSU</name>